<organism>
    <name type="scientific">Dictyostelium discoideum</name>
    <name type="common">Social amoeba</name>
    <dbReference type="NCBI Taxonomy" id="44689"/>
    <lineage>
        <taxon>Eukaryota</taxon>
        <taxon>Amoebozoa</taxon>
        <taxon>Evosea</taxon>
        <taxon>Eumycetozoa</taxon>
        <taxon>Dictyostelia</taxon>
        <taxon>Dictyosteliales</taxon>
        <taxon>Dictyosteliaceae</taxon>
        <taxon>Dictyostelium</taxon>
    </lineage>
</organism>
<feature type="chain" id="PRO_0000327952" description="Calcium up-regulated protein D">
    <location>
        <begin position="1"/>
        <end position="634"/>
    </location>
</feature>
<feature type="domain" description="Ricin B-type lectin 1" evidence="2">
    <location>
        <begin position="27"/>
        <end position="146"/>
    </location>
</feature>
<feature type="domain" description="Ricin B-type lectin 2" evidence="2">
    <location>
        <begin position="117"/>
        <end position="250"/>
    </location>
</feature>
<feature type="region of interest" description="Disordered" evidence="3">
    <location>
        <begin position="1"/>
        <end position="23"/>
    </location>
</feature>
<proteinExistence type="evidence at transcript level"/>
<keyword id="KW-0963">Cytoplasm</keyword>
<keyword id="KW-0430">Lectin</keyword>
<keyword id="KW-0472">Membrane</keyword>
<keyword id="KW-1185">Reference proteome</keyword>
<keyword id="KW-0677">Repeat</keyword>
<evidence type="ECO:0000250" key="1"/>
<evidence type="ECO:0000255" key="2">
    <source>
        <dbReference type="PROSITE-ProRule" id="PRU00174"/>
    </source>
</evidence>
<evidence type="ECO:0000256" key="3">
    <source>
        <dbReference type="SAM" id="MobiDB-lite"/>
    </source>
</evidence>
<evidence type="ECO:0000269" key="4">
    <source>
    </source>
</evidence>
<evidence type="ECO:0000305" key="5"/>
<comment type="function">
    <text evidence="1">May play an important role in stabilizing and/or regulating the cell membrane during Ca(2+) stress or certain stages of development.</text>
</comment>
<comment type="subcellular location">
    <subcellularLocation>
        <location>Cytoplasm</location>
    </subcellularLocation>
    <subcellularLocation>
        <location evidence="1">Membrane</location>
        <topology evidence="1">Peripheral membrane protein</topology>
    </subcellularLocation>
</comment>
<comment type="developmental stage">
    <text evidence="4">Expressed at high levels during aggregation and late development and at low levels during the slug stage.</text>
</comment>
<comment type="induction">
    <text evidence="4">Induced by high levels of extracellular Ca(2+).</text>
</comment>
<comment type="similarity">
    <text evidence="5">Belongs to the cup family.</text>
</comment>
<name>CUPD_DICDI</name>
<accession>Q54BF5</accession>
<accession>Q7Z201</accession>
<dbReference type="EMBL" id="AY282570">
    <property type="protein sequence ID" value="AAP40292.1"/>
    <property type="molecule type" value="Genomic_DNA"/>
</dbReference>
<dbReference type="EMBL" id="AAFI02000218">
    <property type="protein sequence ID" value="EAL60580.2"/>
    <property type="molecule type" value="Genomic_DNA"/>
</dbReference>
<dbReference type="RefSeq" id="XP_629074.3">
    <property type="nucleotide sequence ID" value="XM_629072.2"/>
</dbReference>
<dbReference type="FunCoup" id="Q54BF5">
    <property type="interactions" value="202"/>
</dbReference>
<dbReference type="CAZy" id="CBM13">
    <property type="family name" value="Carbohydrate-Binding Module Family 13"/>
</dbReference>
<dbReference type="PaxDb" id="44689-DDB0266357"/>
<dbReference type="GeneID" id="8629366"/>
<dbReference type="KEGG" id="ddi:DDB_G0293536"/>
<dbReference type="dictyBase" id="DDB_G0293536">
    <property type="gene designation" value="cupD"/>
</dbReference>
<dbReference type="VEuPathDB" id="AmoebaDB:DDB_G0293536"/>
<dbReference type="InParanoid" id="Q54BF5"/>
<dbReference type="PhylomeDB" id="Q54BF5"/>
<dbReference type="PRO" id="PR:Q54BF5"/>
<dbReference type="Proteomes" id="UP000002195">
    <property type="component" value="Chromosome 6"/>
</dbReference>
<dbReference type="GO" id="GO:0005737">
    <property type="term" value="C:cytoplasm"/>
    <property type="evidence" value="ECO:0000314"/>
    <property type="project" value="dictyBase"/>
</dbReference>
<dbReference type="GO" id="GO:0016020">
    <property type="term" value="C:membrane"/>
    <property type="evidence" value="ECO:0007669"/>
    <property type="project" value="UniProtKB-SubCell"/>
</dbReference>
<dbReference type="GO" id="GO:0005634">
    <property type="term" value="C:nucleus"/>
    <property type="evidence" value="ECO:0000314"/>
    <property type="project" value="dictyBase"/>
</dbReference>
<dbReference type="GO" id="GO:0030246">
    <property type="term" value="F:carbohydrate binding"/>
    <property type="evidence" value="ECO:0007669"/>
    <property type="project" value="UniProtKB-KW"/>
</dbReference>
<dbReference type="GO" id="GO:0043157">
    <property type="term" value="P:response to cation stress"/>
    <property type="evidence" value="ECO:0000314"/>
    <property type="project" value="dictyBase"/>
</dbReference>
<dbReference type="FunFam" id="2.80.10.50:FF:000086">
    <property type="entry name" value="Calcium up-regulated protein A"/>
    <property type="match status" value="1"/>
</dbReference>
<dbReference type="Gene3D" id="2.80.10.50">
    <property type="match status" value="2"/>
</dbReference>
<dbReference type="InterPro" id="IPR051780">
    <property type="entry name" value="Ca_Up-reg_Membrane_Reg"/>
</dbReference>
<dbReference type="InterPro" id="IPR035992">
    <property type="entry name" value="Ricin_B-like_lectins"/>
</dbReference>
<dbReference type="InterPro" id="IPR000772">
    <property type="entry name" value="Ricin_B_lectin"/>
</dbReference>
<dbReference type="PANTHER" id="PTHR31599">
    <property type="entry name" value="CALCIUM UP-REGULATED PROTEIN A-RELATED"/>
    <property type="match status" value="1"/>
</dbReference>
<dbReference type="PANTHER" id="PTHR31599:SF2">
    <property type="entry name" value="CALCIUM UP-REGULATED PROTEIN A-RELATED"/>
    <property type="match status" value="1"/>
</dbReference>
<dbReference type="Pfam" id="PF00652">
    <property type="entry name" value="Ricin_B_lectin"/>
    <property type="match status" value="1"/>
</dbReference>
<dbReference type="SUPFAM" id="SSF50370">
    <property type="entry name" value="Ricin B-like lectins"/>
    <property type="match status" value="2"/>
</dbReference>
<dbReference type="PROSITE" id="PS50231">
    <property type="entry name" value="RICIN_B_LECTIN"/>
    <property type="match status" value="2"/>
</dbReference>
<protein>
    <recommendedName>
        <fullName>Calcium up-regulated protein D</fullName>
    </recommendedName>
</protein>
<sequence length="634" mass="70686">MINIEDISKSSNQSEEKQLKSTSTSSKPKYSFVAKSLFKGSNNITPYYLSTSNTFQCVASESIQTWLLSDDGHIFTSSGNFVLDVSSGGYFVELVQLNSNSKTQIWTIDTTNNKIQPGNGKYLDIDSLNICVAPLNGNATQKWTTFRRAPIPTGNWGYFQSKQLDSNNNYWGLSVLNNSTSYNTSVVMNKVQAKSIGQIWQMTNDGHILSRLDGNLVLDIGPSIDGSKTNYHLNTNVYKANDLMQQWGINENNQIFNQYYPNLCIGFVGELGVDSTVNCVLAQPSSASDINFQWIANPTYSLNQIVSEVPEPFPAYTSGDLLASYQYLSDDATNGYTDDIRSLYTSINVNLEIFYVNVTNATCPSSIHSTEDFSYVQNQIKNELTYAINVRLVFDNYSGFYSKLFSQGSTNLTNLANLINVDMSSDQVVNGDYTDAITSVFYAIISEIPIGGSIIANISESAVQFGELYAESNDSGPSTYQVTLSKLYDHLNENYENEMANAQRIKNTILQDWGMMSKTFALCFLPTNNPSSLNINGLDFQKISTIASLAYQTAIIQMLLPTNYQIYFTPAGYYAPVSSDDYSYTDSTGTYIMAEIDNCNSHPPKALTGFKTRSFHIFLWLEFSYLCDLLQYGR</sequence>
<gene>
    <name type="primary">cupD</name>
    <name type="ORF">DDB_G0293536</name>
</gene>
<reference key="1">
    <citation type="journal article" date="2004" name="Eukaryot. Cell">
        <title>The Ca2+/calcineurin-regulated cup gene family in Dictyostelium discoideum and its possible involvement in development.</title>
        <authorList>
            <person name="Coukell B."/>
            <person name="Li Y."/>
            <person name="Moniakis J."/>
            <person name="Cameron A."/>
        </authorList>
    </citation>
    <scope>NUCLEOTIDE SEQUENCE [GENOMIC DNA]</scope>
    <scope>DEVELOPMENTAL STAGE</scope>
    <scope>INDUCTION</scope>
</reference>
<reference key="2">
    <citation type="journal article" date="2005" name="Nature">
        <title>The genome of the social amoeba Dictyostelium discoideum.</title>
        <authorList>
            <person name="Eichinger L."/>
            <person name="Pachebat J.A."/>
            <person name="Gloeckner G."/>
            <person name="Rajandream M.A."/>
            <person name="Sucgang R."/>
            <person name="Berriman M."/>
            <person name="Song J."/>
            <person name="Olsen R."/>
            <person name="Szafranski K."/>
            <person name="Xu Q."/>
            <person name="Tunggal B."/>
            <person name="Kummerfeld S."/>
            <person name="Madera M."/>
            <person name="Konfortov B.A."/>
            <person name="Rivero F."/>
            <person name="Bankier A.T."/>
            <person name="Lehmann R."/>
            <person name="Hamlin N."/>
            <person name="Davies R."/>
            <person name="Gaudet P."/>
            <person name="Fey P."/>
            <person name="Pilcher K."/>
            <person name="Chen G."/>
            <person name="Saunders D."/>
            <person name="Sodergren E.J."/>
            <person name="Davis P."/>
            <person name="Kerhornou A."/>
            <person name="Nie X."/>
            <person name="Hall N."/>
            <person name="Anjard C."/>
            <person name="Hemphill L."/>
            <person name="Bason N."/>
            <person name="Farbrother P."/>
            <person name="Desany B."/>
            <person name="Just E."/>
            <person name="Morio T."/>
            <person name="Rost R."/>
            <person name="Churcher C.M."/>
            <person name="Cooper J."/>
            <person name="Haydock S."/>
            <person name="van Driessche N."/>
            <person name="Cronin A."/>
            <person name="Goodhead I."/>
            <person name="Muzny D.M."/>
            <person name="Mourier T."/>
            <person name="Pain A."/>
            <person name="Lu M."/>
            <person name="Harper D."/>
            <person name="Lindsay R."/>
            <person name="Hauser H."/>
            <person name="James K.D."/>
            <person name="Quiles M."/>
            <person name="Madan Babu M."/>
            <person name="Saito T."/>
            <person name="Buchrieser C."/>
            <person name="Wardroper A."/>
            <person name="Felder M."/>
            <person name="Thangavelu M."/>
            <person name="Johnson D."/>
            <person name="Knights A."/>
            <person name="Loulseged H."/>
            <person name="Mungall K.L."/>
            <person name="Oliver K."/>
            <person name="Price C."/>
            <person name="Quail M.A."/>
            <person name="Urushihara H."/>
            <person name="Hernandez J."/>
            <person name="Rabbinowitsch E."/>
            <person name="Steffen D."/>
            <person name="Sanders M."/>
            <person name="Ma J."/>
            <person name="Kohara Y."/>
            <person name="Sharp S."/>
            <person name="Simmonds M.N."/>
            <person name="Spiegler S."/>
            <person name="Tivey A."/>
            <person name="Sugano S."/>
            <person name="White B."/>
            <person name="Walker D."/>
            <person name="Woodward J.R."/>
            <person name="Winckler T."/>
            <person name="Tanaka Y."/>
            <person name="Shaulsky G."/>
            <person name="Schleicher M."/>
            <person name="Weinstock G.M."/>
            <person name="Rosenthal A."/>
            <person name="Cox E.C."/>
            <person name="Chisholm R.L."/>
            <person name="Gibbs R.A."/>
            <person name="Loomis W.F."/>
            <person name="Platzer M."/>
            <person name="Kay R.R."/>
            <person name="Williams J.G."/>
            <person name="Dear P.H."/>
            <person name="Noegel A.A."/>
            <person name="Barrell B.G."/>
            <person name="Kuspa A."/>
        </authorList>
    </citation>
    <scope>NUCLEOTIDE SEQUENCE [LARGE SCALE GENOMIC DNA]</scope>
    <source>
        <strain>AX4</strain>
    </source>
</reference>